<feature type="chain" id="PRO_0000371896" description="NADH-quinone oxidoreductase subunit D">
    <location>
        <begin position="1"/>
        <end position="417"/>
    </location>
</feature>
<name>NUOD_NITMU</name>
<protein>
    <recommendedName>
        <fullName evidence="1">NADH-quinone oxidoreductase subunit D</fullName>
        <ecNumber evidence="1">7.1.1.-</ecNumber>
    </recommendedName>
    <alternativeName>
        <fullName evidence="1">NADH dehydrogenase I subunit D</fullName>
    </alternativeName>
    <alternativeName>
        <fullName evidence="1">NDH-1 subunit D</fullName>
    </alternativeName>
</protein>
<comment type="function">
    <text evidence="1">NDH-1 shuttles electrons from NADH, via FMN and iron-sulfur (Fe-S) centers, to quinones in the respiratory chain. The immediate electron acceptor for the enzyme in this species is believed to be ubiquinone. Couples the redox reaction to proton translocation (for every two electrons transferred, four hydrogen ions are translocated across the cytoplasmic membrane), and thus conserves the redox energy in a proton gradient.</text>
</comment>
<comment type="catalytic activity">
    <reaction evidence="1">
        <text>a quinone + NADH + 5 H(+)(in) = a quinol + NAD(+) + 4 H(+)(out)</text>
        <dbReference type="Rhea" id="RHEA:57888"/>
        <dbReference type="ChEBI" id="CHEBI:15378"/>
        <dbReference type="ChEBI" id="CHEBI:24646"/>
        <dbReference type="ChEBI" id="CHEBI:57540"/>
        <dbReference type="ChEBI" id="CHEBI:57945"/>
        <dbReference type="ChEBI" id="CHEBI:132124"/>
    </reaction>
</comment>
<comment type="subunit">
    <text evidence="1">NDH-1 is composed of 14 different subunits. Subunits NuoB, C, D, E, F, and G constitute the peripheral sector of the complex.</text>
</comment>
<comment type="subcellular location">
    <subcellularLocation>
        <location evidence="1">Cell inner membrane</location>
        <topology evidence="1">Peripheral membrane protein</topology>
        <orientation evidence="1">Cytoplasmic side</orientation>
    </subcellularLocation>
</comment>
<comment type="similarity">
    <text evidence="1">Belongs to the complex I 49 kDa subunit family.</text>
</comment>
<keyword id="KW-0997">Cell inner membrane</keyword>
<keyword id="KW-1003">Cell membrane</keyword>
<keyword id="KW-0472">Membrane</keyword>
<keyword id="KW-0520">NAD</keyword>
<keyword id="KW-0874">Quinone</keyword>
<keyword id="KW-1185">Reference proteome</keyword>
<keyword id="KW-1278">Translocase</keyword>
<keyword id="KW-0813">Transport</keyword>
<keyword id="KW-0830">Ubiquinone</keyword>
<gene>
    <name evidence="1" type="primary">nuoD</name>
    <name type="ordered locus">Nmul_A1094</name>
</gene>
<organism>
    <name type="scientific">Nitrosospira multiformis (strain ATCC 25196 / NCIMB 11849 / C 71)</name>
    <dbReference type="NCBI Taxonomy" id="323848"/>
    <lineage>
        <taxon>Bacteria</taxon>
        <taxon>Pseudomonadati</taxon>
        <taxon>Pseudomonadota</taxon>
        <taxon>Betaproteobacteria</taxon>
        <taxon>Nitrosomonadales</taxon>
        <taxon>Nitrosomonadaceae</taxon>
        <taxon>Nitrosospira</taxon>
    </lineage>
</organism>
<evidence type="ECO:0000255" key="1">
    <source>
        <dbReference type="HAMAP-Rule" id="MF_01358"/>
    </source>
</evidence>
<dbReference type="EC" id="7.1.1.-" evidence="1"/>
<dbReference type="EMBL" id="CP000103">
    <property type="protein sequence ID" value="ABB74397.1"/>
    <property type="molecule type" value="Genomic_DNA"/>
</dbReference>
<dbReference type="RefSeq" id="WP_011380438.1">
    <property type="nucleotide sequence ID" value="NC_007614.1"/>
</dbReference>
<dbReference type="SMR" id="Q2YA24"/>
<dbReference type="STRING" id="323848.Nmul_A1094"/>
<dbReference type="KEGG" id="nmu:Nmul_A1094"/>
<dbReference type="eggNOG" id="COG0649">
    <property type="taxonomic scope" value="Bacteria"/>
</dbReference>
<dbReference type="HOGENOM" id="CLU_015134_1_1_4"/>
<dbReference type="OrthoDB" id="9801496at2"/>
<dbReference type="Proteomes" id="UP000002718">
    <property type="component" value="Chromosome"/>
</dbReference>
<dbReference type="GO" id="GO:0005886">
    <property type="term" value="C:plasma membrane"/>
    <property type="evidence" value="ECO:0007669"/>
    <property type="project" value="UniProtKB-SubCell"/>
</dbReference>
<dbReference type="GO" id="GO:0051287">
    <property type="term" value="F:NAD binding"/>
    <property type="evidence" value="ECO:0007669"/>
    <property type="project" value="InterPro"/>
</dbReference>
<dbReference type="GO" id="GO:0050136">
    <property type="term" value="F:NADH:ubiquinone reductase (non-electrogenic) activity"/>
    <property type="evidence" value="ECO:0007669"/>
    <property type="project" value="UniProtKB-UniRule"/>
</dbReference>
<dbReference type="GO" id="GO:0048038">
    <property type="term" value="F:quinone binding"/>
    <property type="evidence" value="ECO:0007669"/>
    <property type="project" value="UniProtKB-KW"/>
</dbReference>
<dbReference type="FunFam" id="1.10.645.10:FF:000005">
    <property type="entry name" value="NADH-quinone oxidoreductase subunit D"/>
    <property type="match status" value="1"/>
</dbReference>
<dbReference type="Gene3D" id="1.10.645.10">
    <property type="entry name" value="Cytochrome-c3 Hydrogenase, chain B"/>
    <property type="match status" value="1"/>
</dbReference>
<dbReference type="HAMAP" id="MF_01358">
    <property type="entry name" value="NDH1_NuoD"/>
    <property type="match status" value="1"/>
</dbReference>
<dbReference type="InterPro" id="IPR001135">
    <property type="entry name" value="NADH_Q_OxRdtase_suD"/>
</dbReference>
<dbReference type="InterPro" id="IPR014029">
    <property type="entry name" value="NADH_UbQ_OxRdtase_49kDa_CS"/>
</dbReference>
<dbReference type="InterPro" id="IPR022885">
    <property type="entry name" value="NDH1_su_D/H"/>
</dbReference>
<dbReference type="InterPro" id="IPR029014">
    <property type="entry name" value="NiFe-Hase_large"/>
</dbReference>
<dbReference type="NCBIfam" id="TIGR01962">
    <property type="entry name" value="NuoD"/>
    <property type="match status" value="1"/>
</dbReference>
<dbReference type="NCBIfam" id="NF004739">
    <property type="entry name" value="PRK06075.1"/>
    <property type="match status" value="1"/>
</dbReference>
<dbReference type="PANTHER" id="PTHR11993:SF10">
    <property type="entry name" value="NADH DEHYDROGENASE [UBIQUINONE] IRON-SULFUR PROTEIN 2, MITOCHONDRIAL"/>
    <property type="match status" value="1"/>
</dbReference>
<dbReference type="PANTHER" id="PTHR11993">
    <property type="entry name" value="NADH-UBIQUINONE OXIDOREDUCTASE 49 KDA SUBUNIT"/>
    <property type="match status" value="1"/>
</dbReference>
<dbReference type="Pfam" id="PF00346">
    <property type="entry name" value="Complex1_49kDa"/>
    <property type="match status" value="1"/>
</dbReference>
<dbReference type="SUPFAM" id="SSF56762">
    <property type="entry name" value="HydB/Nqo4-like"/>
    <property type="match status" value="1"/>
</dbReference>
<dbReference type="PROSITE" id="PS00535">
    <property type="entry name" value="COMPLEX1_49K"/>
    <property type="match status" value="1"/>
</dbReference>
<sequence length="417" mass="47987">MAEIRNYTMNFGPQHPAAHGVLRLVLELDGEVIQRADPHIGLLHRATEKLAEYKTYIQSVPYMDRLDYVSMMANEHAYVMAIEKLLQLEVPIRAQYIRVMFDEITRILNHLLWLGAHALDVGAMTVFLYAFRDREDLMDAYESVSGARMHAAYYRPGGVYRDLPDSMPQYKASKIHDEKTTKARNENRQGSLLDFIEDFTNRFPTYVDEYETLLTDNRIWKQRLVGIGTVSPERAMALGFTGPMLRGSGVEWDLRKKQPYEVYDQLDFDIPVGVNGDCYDRYLVRIEEFRQSNRIIRQCVDWLRKNPGPVITDNHKVAPPSRVNMKQNMEELIHHFKLFTEGFHVPPGETYAAVEHPKGEFGIYLISDGANMPYRMKIRAPGFAHLAALDEMSRGHMIADVVAIIGTQDIVFGEIDR</sequence>
<proteinExistence type="inferred from homology"/>
<accession>Q2YA24</accession>
<reference key="1">
    <citation type="submission" date="2005-08" db="EMBL/GenBank/DDBJ databases">
        <title>Complete sequence of chromosome 1 of Nitrosospira multiformis ATCC 25196.</title>
        <authorList>
            <person name="Copeland A."/>
            <person name="Lucas S."/>
            <person name="Lapidus A."/>
            <person name="Barry K."/>
            <person name="Detter J.C."/>
            <person name="Glavina T."/>
            <person name="Hammon N."/>
            <person name="Israni S."/>
            <person name="Pitluck S."/>
            <person name="Chain P."/>
            <person name="Malfatti S."/>
            <person name="Shin M."/>
            <person name="Vergez L."/>
            <person name="Schmutz J."/>
            <person name="Larimer F."/>
            <person name="Land M."/>
            <person name="Hauser L."/>
            <person name="Kyrpides N."/>
            <person name="Lykidis A."/>
            <person name="Richardson P."/>
        </authorList>
    </citation>
    <scope>NUCLEOTIDE SEQUENCE [LARGE SCALE GENOMIC DNA]</scope>
    <source>
        <strain>ATCC 25196 / NCIMB 11849 / C 71</strain>
    </source>
</reference>